<gene>
    <name evidence="1" type="primary">rpoZ</name>
    <name type="ordered locus">PSHAa2791</name>
</gene>
<reference key="1">
    <citation type="journal article" date="2005" name="Genome Res.">
        <title>Coping with cold: the genome of the versatile marine Antarctica bacterium Pseudoalteromonas haloplanktis TAC125.</title>
        <authorList>
            <person name="Medigue C."/>
            <person name="Krin E."/>
            <person name="Pascal G."/>
            <person name="Barbe V."/>
            <person name="Bernsel A."/>
            <person name="Bertin P.N."/>
            <person name="Cheung F."/>
            <person name="Cruveiller S."/>
            <person name="D'Amico S."/>
            <person name="Duilio A."/>
            <person name="Fang G."/>
            <person name="Feller G."/>
            <person name="Ho C."/>
            <person name="Mangenot S."/>
            <person name="Marino G."/>
            <person name="Nilsson J."/>
            <person name="Parrilli E."/>
            <person name="Rocha E.P.C."/>
            <person name="Rouy Z."/>
            <person name="Sekowska A."/>
            <person name="Tutino M.L."/>
            <person name="Vallenet D."/>
            <person name="von Heijne G."/>
            <person name="Danchin A."/>
        </authorList>
    </citation>
    <scope>NUCLEOTIDE SEQUENCE [LARGE SCALE GENOMIC DNA]</scope>
    <source>
        <strain>TAC 125</strain>
    </source>
</reference>
<protein>
    <recommendedName>
        <fullName evidence="1">DNA-directed RNA polymerase subunit omega</fullName>
        <shortName evidence="1">RNAP omega subunit</shortName>
        <ecNumber evidence="1">2.7.7.6</ecNumber>
    </recommendedName>
    <alternativeName>
        <fullName evidence="1">RNA polymerase omega subunit</fullName>
    </alternativeName>
    <alternativeName>
        <fullName evidence="1">Transcriptase subunit omega</fullName>
    </alternativeName>
</protein>
<evidence type="ECO:0000255" key="1">
    <source>
        <dbReference type="HAMAP-Rule" id="MF_00366"/>
    </source>
</evidence>
<proteinExistence type="inferred from homology"/>
<name>RPOZ_PSET1</name>
<accession>Q3IJH7</accession>
<dbReference type="EC" id="2.7.7.6" evidence="1"/>
<dbReference type="EMBL" id="CR954246">
    <property type="protein sequence ID" value="CAI87834.1"/>
    <property type="molecule type" value="Genomic_DNA"/>
</dbReference>
<dbReference type="SMR" id="Q3IJH7"/>
<dbReference type="STRING" id="326442.PSHAa2791"/>
<dbReference type="KEGG" id="pha:PSHAa2791"/>
<dbReference type="eggNOG" id="COG1758">
    <property type="taxonomic scope" value="Bacteria"/>
</dbReference>
<dbReference type="HOGENOM" id="CLU_125406_5_2_6"/>
<dbReference type="BioCyc" id="PHAL326442:PSHA_RS13710-MONOMER"/>
<dbReference type="Proteomes" id="UP000006843">
    <property type="component" value="Chromosome I"/>
</dbReference>
<dbReference type="GO" id="GO:0000428">
    <property type="term" value="C:DNA-directed RNA polymerase complex"/>
    <property type="evidence" value="ECO:0007669"/>
    <property type="project" value="UniProtKB-KW"/>
</dbReference>
<dbReference type="GO" id="GO:0003677">
    <property type="term" value="F:DNA binding"/>
    <property type="evidence" value="ECO:0007669"/>
    <property type="project" value="UniProtKB-UniRule"/>
</dbReference>
<dbReference type="GO" id="GO:0003899">
    <property type="term" value="F:DNA-directed RNA polymerase activity"/>
    <property type="evidence" value="ECO:0007669"/>
    <property type="project" value="UniProtKB-UniRule"/>
</dbReference>
<dbReference type="GO" id="GO:0006351">
    <property type="term" value="P:DNA-templated transcription"/>
    <property type="evidence" value="ECO:0007669"/>
    <property type="project" value="UniProtKB-UniRule"/>
</dbReference>
<dbReference type="Gene3D" id="3.90.940.10">
    <property type="match status" value="1"/>
</dbReference>
<dbReference type="HAMAP" id="MF_00366">
    <property type="entry name" value="RNApol_bact_RpoZ"/>
    <property type="match status" value="1"/>
</dbReference>
<dbReference type="InterPro" id="IPR003716">
    <property type="entry name" value="DNA-dir_RNA_pol_omega"/>
</dbReference>
<dbReference type="InterPro" id="IPR006110">
    <property type="entry name" value="Pol_omega/Rpo6/RPB6"/>
</dbReference>
<dbReference type="InterPro" id="IPR036161">
    <property type="entry name" value="RPB6/omega-like_sf"/>
</dbReference>
<dbReference type="NCBIfam" id="TIGR00690">
    <property type="entry name" value="rpoZ"/>
    <property type="match status" value="1"/>
</dbReference>
<dbReference type="PANTHER" id="PTHR34476">
    <property type="entry name" value="DNA-DIRECTED RNA POLYMERASE SUBUNIT OMEGA"/>
    <property type="match status" value="1"/>
</dbReference>
<dbReference type="PANTHER" id="PTHR34476:SF1">
    <property type="entry name" value="DNA-DIRECTED RNA POLYMERASE SUBUNIT OMEGA"/>
    <property type="match status" value="1"/>
</dbReference>
<dbReference type="Pfam" id="PF01192">
    <property type="entry name" value="RNA_pol_Rpb6"/>
    <property type="match status" value="1"/>
</dbReference>
<dbReference type="SMART" id="SM01409">
    <property type="entry name" value="RNA_pol_Rpb6"/>
    <property type="match status" value="1"/>
</dbReference>
<dbReference type="SUPFAM" id="SSF63562">
    <property type="entry name" value="RPB6/omega subunit-like"/>
    <property type="match status" value="1"/>
</dbReference>
<sequence length="91" mass="9774">MARVTVEDAVDAIGNRFDLILVAARRARQIAVGGKRPLVDPENDKPTVIALREIELGLVDSSSMDVIDREEQQHQEAAELAAVAAIVGGNQ</sequence>
<comment type="function">
    <text evidence="1">Promotes RNA polymerase assembly. Latches the N- and C-terminal regions of the beta' subunit thereby facilitating its interaction with the beta and alpha subunits.</text>
</comment>
<comment type="catalytic activity">
    <reaction evidence="1">
        <text>RNA(n) + a ribonucleoside 5'-triphosphate = RNA(n+1) + diphosphate</text>
        <dbReference type="Rhea" id="RHEA:21248"/>
        <dbReference type="Rhea" id="RHEA-COMP:14527"/>
        <dbReference type="Rhea" id="RHEA-COMP:17342"/>
        <dbReference type="ChEBI" id="CHEBI:33019"/>
        <dbReference type="ChEBI" id="CHEBI:61557"/>
        <dbReference type="ChEBI" id="CHEBI:140395"/>
        <dbReference type="EC" id="2.7.7.6"/>
    </reaction>
</comment>
<comment type="subunit">
    <text evidence="1">The RNAP catalytic core consists of 2 alpha, 1 beta, 1 beta' and 1 omega subunit. When a sigma factor is associated with the core the holoenzyme is formed, which can initiate transcription.</text>
</comment>
<comment type="similarity">
    <text evidence="1">Belongs to the RNA polymerase subunit omega family.</text>
</comment>
<keyword id="KW-0240">DNA-directed RNA polymerase</keyword>
<keyword id="KW-0548">Nucleotidyltransferase</keyword>
<keyword id="KW-1185">Reference proteome</keyword>
<keyword id="KW-0804">Transcription</keyword>
<keyword id="KW-0808">Transferase</keyword>
<organism>
    <name type="scientific">Pseudoalteromonas translucida (strain TAC 125)</name>
    <dbReference type="NCBI Taxonomy" id="326442"/>
    <lineage>
        <taxon>Bacteria</taxon>
        <taxon>Pseudomonadati</taxon>
        <taxon>Pseudomonadota</taxon>
        <taxon>Gammaproteobacteria</taxon>
        <taxon>Alteromonadales</taxon>
        <taxon>Pseudoalteromonadaceae</taxon>
        <taxon>Pseudoalteromonas</taxon>
    </lineage>
</organism>
<feature type="chain" id="PRO_0000237489" description="DNA-directed RNA polymerase subunit omega">
    <location>
        <begin position="1"/>
        <end position="91"/>
    </location>
</feature>